<evidence type="ECO:0000255" key="1">
    <source>
        <dbReference type="HAMAP-Rule" id="MF_00453"/>
    </source>
</evidence>
<feature type="chain" id="PRO_0000236934" description="Phosphoenolpyruvate carboxykinase (ATP)">
    <location>
        <begin position="1"/>
        <end position="513"/>
    </location>
</feature>
<feature type="binding site" evidence="1">
    <location>
        <position position="45"/>
    </location>
    <ligand>
        <name>substrate</name>
    </ligand>
</feature>
<feature type="binding site" evidence="1">
    <location>
        <position position="179"/>
    </location>
    <ligand>
        <name>substrate</name>
    </ligand>
</feature>
<feature type="binding site" evidence="1">
    <location>
        <position position="185"/>
    </location>
    <ligand>
        <name>ATP</name>
        <dbReference type="ChEBI" id="CHEBI:30616"/>
    </ligand>
</feature>
<feature type="binding site" evidence="1">
    <location>
        <position position="185"/>
    </location>
    <ligand>
        <name>Mn(2+)</name>
        <dbReference type="ChEBI" id="CHEBI:29035"/>
    </ligand>
</feature>
<feature type="binding site" evidence="1">
    <location>
        <position position="185"/>
    </location>
    <ligand>
        <name>substrate</name>
    </ligand>
</feature>
<feature type="binding site" evidence="1">
    <location>
        <position position="204"/>
    </location>
    <ligand>
        <name>ATP</name>
        <dbReference type="ChEBI" id="CHEBI:30616"/>
    </ligand>
</feature>
<feature type="binding site" evidence="1">
    <location>
        <position position="204"/>
    </location>
    <ligand>
        <name>Mn(2+)</name>
        <dbReference type="ChEBI" id="CHEBI:29035"/>
    </ligand>
</feature>
<feature type="binding site" evidence="1">
    <location>
        <begin position="220"/>
        <end position="228"/>
    </location>
    <ligand>
        <name>ATP</name>
        <dbReference type="ChEBI" id="CHEBI:30616"/>
    </ligand>
</feature>
<feature type="binding site" evidence="1">
    <location>
        <position position="241"/>
    </location>
    <ligand>
        <name>Mn(2+)</name>
        <dbReference type="ChEBI" id="CHEBI:29035"/>
    </ligand>
</feature>
<feature type="binding site" evidence="1">
    <location>
        <position position="269"/>
    </location>
    <ligand>
        <name>ATP</name>
        <dbReference type="ChEBI" id="CHEBI:30616"/>
    </ligand>
</feature>
<feature type="binding site" evidence="1">
    <location>
        <position position="305"/>
    </location>
    <ligand>
        <name>ATP</name>
        <dbReference type="ChEBI" id="CHEBI:30616"/>
    </ligand>
</feature>
<feature type="binding site" evidence="1">
    <location>
        <position position="305"/>
    </location>
    <ligand>
        <name>substrate</name>
    </ligand>
</feature>
<feature type="binding site" evidence="1">
    <location>
        <position position="431"/>
    </location>
    <ligand>
        <name>ATP</name>
        <dbReference type="ChEBI" id="CHEBI:30616"/>
    </ligand>
</feature>
<proteinExistence type="inferred from homology"/>
<comment type="function">
    <text evidence="1">Involved in the gluconeogenesis. Catalyzes the conversion of oxaloacetate (OAA) to phosphoenolpyruvate (PEP) through direct phosphoryl transfer between the nucleoside triphosphate and OAA.</text>
</comment>
<comment type="catalytic activity">
    <reaction evidence="1">
        <text>oxaloacetate + ATP = phosphoenolpyruvate + ADP + CO2</text>
        <dbReference type="Rhea" id="RHEA:18617"/>
        <dbReference type="ChEBI" id="CHEBI:16452"/>
        <dbReference type="ChEBI" id="CHEBI:16526"/>
        <dbReference type="ChEBI" id="CHEBI:30616"/>
        <dbReference type="ChEBI" id="CHEBI:58702"/>
        <dbReference type="ChEBI" id="CHEBI:456216"/>
        <dbReference type="EC" id="4.1.1.49"/>
    </reaction>
</comment>
<comment type="cofactor">
    <cofactor evidence="1">
        <name>Mn(2+)</name>
        <dbReference type="ChEBI" id="CHEBI:29035"/>
    </cofactor>
    <text evidence="1">Binds 1 Mn(2+) ion per subunit.</text>
</comment>
<comment type="pathway">
    <text evidence="1">Carbohydrate biosynthesis; gluconeogenesis.</text>
</comment>
<comment type="subunit">
    <text evidence="1">Monomer.</text>
</comment>
<comment type="subcellular location">
    <subcellularLocation>
        <location evidence="1">Cytoplasm</location>
    </subcellularLocation>
</comment>
<comment type="similarity">
    <text evidence="1">Belongs to the phosphoenolpyruvate carboxykinase (ATP) family.</text>
</comment>
<sequence>MTQANNAVYTDLSVDDLVKEALNRGEGELADTGALVVRTGHRTGRSPVDRFIVEEPSTQAAIAWGPINRKFPADKFDALWARVEAFNNAQEHFVSHVHVGAAEDHYLAVKMTTQTAWQNLFGRCLFINPAQYNPAGREEWQVLNVANFECVPERDGTNSDGCVIINFAQKKVLIAGMRYAGEMKKAMFSVQNFLLPAADVLPMHCAANIGEEGDVTLFFGLSGTGKTTLSADESRYLIGDDEHGWGEGVVFNIEGGCYAKCIDLSEKNEPVIWKAIKHGAVLENVVIDDAKHADYADVSLTQNSRAAYPLEHVAKRSEKNLGGEPNAVIFLTCDLTGVLPPVSILNEEQAAYHFLSGYTALVGSTEMGSGSGIKSTFSTCFGAPFFPRPAGEYAELLIKRIRGFGSKVYLVNTGWTGGGYGVGKRFNIPTTRAVIAAIQSGALIGAATEHLDTINLDVPLAVPGVETNLLNPRNTWADKAAYDEAAKALAGLFIENFKKFEVSDAIKAAGPKL</sequence>
<reference key="1">
    <citation type="journal article" date="2009" name="Genome Biol.">
        <title>Genomic and genetic analyses of diversity and plant interactions of Pseudomonas fluorescens.</title>
        <authorList>
            <person name="Silby M.W."/>
            <person name="Cerdeno-Tarraga A.M."/>
            <person name="Vernikos G.S."/>
            <person name="Giddens S.R."/>
            <person name="Jackson R.W."/>
            <person name="Preston G.M."/>
            <person name="Zhang X.-X."/>
            <person name="Moon C.D."/>
            <person name="Gehrig S.M."/>
            <person name="Godfrey S.A.C."/>
            <person name="Knight C.G."/>
            <person name="Malone J.G."/>
            <person name="Robinson Z."/>
            <person name="Spiers A.J."/>
            <person name="Harris S."/>
            <person name="Challis G.L."/>
            <person name="Yaxley A.M."/>
            <person name="Harris D."/>
            <person name="Seeger K."/>
            <person name="Murphy L."/>
            <person name="Rutter S."/>
            <person name="Squares R."/>
            <person name="Quail M.A."/>
            <person name="Saunders E."/>
            <person name="Mavromatis K."/>
            <person name="Brettin T.S."/>
            <person name="Bentley S.D."/>
            <person name="Hothersall J."/>
            <person name="Stephens E."/>
            <person name="Thomas C.M."/>
            <person name="Parkhill J."/>
            <person name="Levy S.B."/>
            <person name="Rainey P.B."/>
            <person name="Thomson N.R."/>
        </authorList>
    </citation>
    <scope>NUCLEOTIDE SEQUENCE [LARGE SCALE GENOMIC DNA]</scope>
    <source>
        <strain>Pf0-1</strain>
    </source>
</reference>
<accession>Q3KJP4</accession>
<gene>
    <name evidence="1" type="primary">pckA</name>
    <name type="ordered locus">Pfl01_0268</name>
</gene>
<organism>
    <name type="scientific">Pseudomonas fluorescens (strain Pf0-1)</name>
    <dbReference type="NCBI Taxonomy" id="205922"/>
    <lineage>
        <taxon>Bacteria</taxon>
        <taxon>Pseudomonadati</taxon>
        <taxon>Pseudomonadota</taxon>
        <taxon>Gammaproteobacteria</taxon>
        <taxon>Pseudomonadales</taxon>
        <taxon>Pseudomonadaceae</taxon>
        <taxon>Pseudomonas</taxon>
    </lineage>
</organism>
<name>PCKA_PSEPF</name>
<protein>
    <recommendedName>
        <fullName evidence="1">Phosphoenolpyruvate carboxykinase (ATP)</fullName>
        <shortName evidence="1">PCK</shortName>
        <shortName evidence="1">PEP carboxykinase</shortName>
        <shortName evidence="1">PEPCK</shortName>
        <ecNumber evidence="1">4.1.1.49</ecNumber>
    </recommendedName>
</protein>
<keyword id="KW-0067">ATP-binding</keyword>
<keyword id="KW-0963">Cytoplasm</keyword>
<keyword id="KW-0210">Decarboxylase</keyword>
<keyword id="KW-0312">Gluconeogenesis</keyword>
<keyword id="KW-0456">Lyase</keyword>
<keyword id="KW-0464">Manganese</keyword>
<keyword id="KW-0479">Metal-binding</keyword>
<keyword id="KW-0547">Nucleotide-binding</keyword>
<dbReference type="EC" id="4.1.1.49" evidence="1"/>
<dbReference type="EMBL" id="CP000094">
    <property type="protein sequence ID" value="ABA72012.1"/>
    <property type="molecule type" value="Genomic_DNA"/>
</dbReference>
<dbReference type="RefSeq" id="WP_007952682.1">
    <property type="nucleotide sequence ID" value="NC_007492.2"/>
</dbReference>
<dbReference type="SMR" id="Q3KJP4"/>
<dbReference type="KEGG" id="pfo:Pfl01_0268"/>
<dbReference type="eggNOG" id="COG1866">
    <property type="taxonomic scope" value="Bacteria"/>
</dbReference>
<dbReference type="HOGENOM" id="CLU_018247_0_1_6"/>
<dbReference type="UniPathway" id="UPA00138"/>
<dbReference type="Proteomes" id="UP000002704">
    <property type="component" value="Chromosome"/>
</dbReference>
<dbReference type="GO" id="GO:0005829">
    <property type="term" value="C:cytosol"/>
    <property type="evidence" value="ECO:0007669"/>
    <property type="project" value="TreeGrafter"/>
</dbReference>
<dbReference type="GO" id="GO:0005524">
    <property type="term" value="F:ATP binding"/>
    <property type="evidence" value="ECO:0007669"/>
    <property type="project" value="UniProtKB-UniRule"/>
</dbReference>
<dbReference type="GO" id="GO:0046872">
    <property type="term" value="F:metal ion binding"/>
    <property type="evidence" value="ECO:0007669"/>
    <property type="project" value="UniProtKB-KW"/>
</dbReference>
<dbReference type="GO" id="GO:0004612">
    <property type="term" value="F:phosphoenolpyruvate carboxykinase (ATP) activity"/>
    <property type="evidence" value="ECO:0007669"/>
    <property type="project" value="UniProtKB-UniRule"/>
</dbReference>
<dbReference type="GO" id="GO:0006094">
    <property type="term" value="P:gluconeogenesis"/>
    <property type="evidence" value="ECO:0007669"/>
    <property type="project" value="UniProtKB-UniRule"/>
</dbReference>
<dbReference type="Gene3D" id="3.90.228.20">
    <property type="match status" value="1"/>
</dbReference>
<dbReference type="Gene3D" id="3.40.449.10">
    <property type="entry name" value="Phosphoenolpyruvate Carboxykinase, domain 1"/>
    <property type="match status" value="1"/>
</dbReference>
<dbReference type="Gene3D" id="2.170.8.10">
    <property type="entry name" value="Phosphoenolpyruvate Carboxykinase, domain 2"/>
    <property type="match status" value="1"/>
</dbReference>
<dbReference type="HAMAP" id="MF_00453">
    <property type="entry name" value="PEPCK_ATP"/>
    <property type="match status" value="1"/>
</dbReference>
<dbReference type="InterPro" id="IPR001272">
    <property type="entry name" value="PEP_carboxykinase_ATP"/>
</dbReference>
<dbReference type="InterPro" id="IPR013035">
    <property type="entry name" value="PEP_carboxykinase_C"/>
</dbReference>
<dbReference type="InterPro" id="IPR008210">
    <property type="entry name" value="PEP_carboxykinase_N"/>
</dbReference>
<dbReference type="InterPro" id="IPR015994">
    <property type="entry name" value="PEPCK_ATP_CS"/>
</dbReference>
<dbReference type="NCBIfam" id="TIGR00224">
    <property type="entry name" value="pckA"/>
    <property type="match status" value="1"/>
</dbReference>
<dbReference type="NCBIfam" id="NF006820">
    <property type="entry name" value="PRK09344.1-2"/>
    <property type="match status" value="1"/>
</dbReference>
<dbReference type="NCBIfam" id="NF006821">
    <property type="entry name" value="PRK09344.1-3"/>
    <property type="match status" value="1"/>
</dbReference>
<dbReference type="NCBIfam" id="NF006823">
    <property type="entry name" value="PRK09344.1-5"/>
    <property type="match status" value="1"/>
</dbReference>
<dbReference type="PANTHER" id="PTHR30031:SF0">
    <property type="entry name" value="PHOSPHOENOLPYRUVATE CARBOXYKINASE (ATP)"/>
    <property type="match status" value="1"/>
</dbReference>
<dbReference type="PANTHER" id="PTHR30031">
    <property type="entry name" value="PHOSPHOENOLPYRUVATE CARBOXYKINASE ATP"/>
    <property type="match status" value="1"/>
</dbReference>
<dbReference type="Pfam" id="PF01293">
    <property type="entry name" value="PEPCK_ATP"/>
    <property type="match status" value="1"/>
</dbReference>
<dbReference type="PIRSF" id="PIRSF006294">
    <property type="entry name" value="PEP_crbxkin"/>
    <property type="match status" value="1"/>
</dbReference>
<dbReference type="SUPFAM" id="SSF68923">
    <property type="entry name" value="PEP carboxykinase N-terminal domain"/>
    <property type="match status" value="1"/>
</dbReference>
<dbReference type="SUPFAM" id="SSF53795">
    <property type="entry name" value="PEP carboxykinase-like"/>
    <property type="match status" value="1"/>
</dbReference>
<dbReference type="PROSITE" id="PS00532">
    <property type="entry name" value="PEPCK_ATP"/>
    <property type="match status" value="1"/>
</dbReference>